<reference key="1">
    <citation type="journal article" date="1997" name="Plant Mol. Biol.">
        <title>Characterization and expression of a rice RAD23 gene.</title>
        <authorList>
            <person name="Schultz T.F."/>
            <person name="Quatrano R.S."/>
        </authorList>
    </citation>
    <scope>NUCLEOTIDE SEQUENCE [MRNA]</scope>
    <scope>INTERACTION WITH VP1</scope>
    <scope>TISSUE SPECIFICITY</scope>
    <source>
        <strain>cv. Nipponbare</strain>
    </source>
</reference>
<reference key="2">
    <citation type="journal article" date="2005" name="Nature">
        <title>The map-based sequence of the rice genome.</title>
        <authorList>
            <consortium name="International rice genome sequencing project (IRGSP)"/>
        </authorList>
    </citation>
    <scope>NUCLEOTIDE SEQUENCE [LARGE SCALE GENOMIC DNA]</scope>
    <source>
        <strain>cv. Nipponbare</strain>
    </source>
</reference>
<reference key="3">
    <citation type="journal article" date="2008" name="Nucleic Acids Res.">
        <title>The rice annotation project database (RAP-DB): 2008 update.</title>
        <authorList>
            <consortium name="The rice annotation project (RAP)"/>
        </authorList>
    </citation>
    <scope>GENOME REANNOTATION</scope>
    <source>
        <strain>cv. Nipponbare</strain>
    </source>
</reference>
<reference key="4">
    <citation type="journal article" date="2013" name="Rice">
        <title>Improvement of the Oryza sativa Nipponbare reference genome using next generation sequence and optical map data.</title>
        <authorList>
            <person name="Kawahara Y."/>
            <person name="de la Bastide M."/>
            <person name="Hamilton J.P."/>
            <person name="Kanamori H."/>
            <person name="McCombie W.R."/>
            <person name="Ouyang S."/>
            <person name="Schwartz D.C."/>
            <person name="Tanaka T."/>
            <person name="Wu J."/>
            <person name="Zhou S."/>
            <person name="Childs K.L."/>
            <person name="Davidson R.M."/>
            <person name="Lin H."/>
            <person name="Quesada-Ocampo L."/>
            <person name="Vaillancourt B."/>
            <person name="Sakai H."/>
            <person name="Lee S.S."/>
            <person name="Kim J."/>
            <person name="Numa H."/>
            <person name="Itoh T."/>
            <person name="Buell C.R."/>
            <person name="Matsumoto T."/>
        </authorList>
    </citation>
    <scope>GENOME REANNOTATION</scope>
    <source>
        <strain>cv. Nipponbare</strain>
    </source>
</reference>
<reference key="5">
    <citation type="journal article" date="2005" name="PLoS Biol.">
        <title>The genomes of Oryza sativa: a history of duplications.</title>
        <authorList>
            <person name="Yu J."/>
            <person name="Wang J."/>
            <person name="Lin W."/>
            <person name="Li S."/>
            <person name="Li H."/>
            <person name="Zhou J."/>
            <person name="Ni P."/>
            <person name="Dong W."/>
            <person name="Hu S."/>
            <person name="Zeng C."/>
            <person name="Zhang J."/>
            <person name="Zhang Y."/>
            <person name="Li R."/>
            <person name="Xu Z."/>
            <person name="Li S."/>
            <person name="Li X."/>
            <person name="Zheng H."/>
            <person name="Cong L."/>
            <person name="Lin L."/>
            <person name="Yin J."/>
            <person name="Geng J."/>
            <person name="Li G."/>
            <person name="Shi J."/>
            <person name="Liu J."/>
            <person name="Lv H."/>
            <person name="Li J."/>
            <person name="Wang J."/>
            <person name="Deng Y."/>
            <person name="Ran L."/>
            <person name="Shi X."/>
            <person name="Wang X."/>
            <person name="Wu Q."/>
            <person name="Li C."/>
            <person name="Ren X."/>
            <person name="Wang J."/>
            <person name="Wang X."/>
            <person name="Li D."/>
            <person name="Liu D."/>
            <person name="Zhang X."/>
            <person name="Ji Z."/>
            <person name="Zhao W."/>
            <person name="Sun Y."/>
            <person name="Zhang Z."/>
            <person name="Bao J."/>
            <person name="Han Y."/>
            <person name="Dong L."/>
            <person name="Ji J."/>
            <person name="Chen P."/>
            <person name="Wu S."/>
            <person name="Liu J."/>
            <person name="Xiao Y."/>
            <person name="Bu D."/>
            <person name="Tan J."/>
            <person name="Yang L."/>
            <person name="Ye C."/>
            <person name="Zhang J."/>
            <person name="Xu J."/>
            <person name="Zhou Y."/>
            <person name="Yu Y."/>
            <person name="Zhang B."/>
            <person name="Zhuang S."/>
            <person name="Wei H."/>
            <person name="Liu B."/>
            <person name="Lei M."/>
            <person name="Yu H."/>
            <person name="Li Y."/>
            <person name="Xu H."/>
            <person name="Wei S."/>
            <person name="He X."/>
            <person name="Fang L."/>
            <person name="Zhang Z."/>
            <person name="Zhang Y."/>
            <person name="Huang X."/>
            <person name="Su Z."/>
            <person name="Tong W."/>
            <person name="Li J."/>
            <person name="Tong Z."/>
            <person name="Li S."/>
            <person name="Ye J."/>
            <person name="Wang L."/>
            <person name="Fang L."/>
            <person name="Lei T."/>
            <person name="Chen C.-S."/>
            <person name="Chen H.-C."/>
            <person name="Xu Z."/>
            <person name="Li H."/>
            <person name="Huang H."/>
            <person name="Zhang F."/>
            <person name="Xu H."/>
            <person name="Li N."/>
            <person name="Zhao C."/>
            <person name="Li S."/>
            <person name="Dong L."/>
            <person name="Huang Y."/>
            <person name="Li L."/>
            <person name="Xi Y."/>
            <person name="Qi Q."/>
            <person name="Li W."/>
            <person name="Zhang B."/>
            <person name="Hu W."/>
            <person name="Zhang Y."/>
            <person name="Tian X."/>
            <person name="Jiao Y."/>
            <person name="Liang X."/>
            <person name="Jin J."/>
            <person name="Gao L."/>
            <person name="Zheng W."/>
            <person name="Hao B."/>
            <person name="Liu S.-M."/>
            <person name="Wang W."/>
            <person name="Yuan L."/>
            <person name="Cao M."/>
            <person name="McDermott J."/>
            <person name="Samudrala R."/>
            <person name="Wang J."/>
            <person name="Wong G.K.-S."/>
            <person name="Yang H."/>
        </authorList>
    </citation>
    <scope>NUCLEOTIDE SEQUENCE [LARGE SCALE GENOMIC DNA]</scope>
    <source>
        <strain>cv. Nipponbare</strain>
    </source>
</reference>
<gene>
    <name type="primary">RAD23</name>
    <name type="ordered locus">Os09g0407200</name>
    <name type="ordered locus">LOC_Os09g24200</name>
    <name type="ORF">OJ1261_A08.49</name>
    <name evidence="7" type="ORF">OsJ_29306</name>
    <name type="ORF">P0465E03.1</name>
</gene>
<feature type="chain" id="PRO_0000114912" description="Probable ubiquitin receptor RAD23">
    <location>
        <begin position="1"/>
        <end position="392"/>
    </location>
</feature>
<feature type="domain" description="Ubiquitin-like" evidence="3">
    <location>
        <begin position="1"/>
        <end position="79"/>
    </location>
</feature>
<feature type="domain" description="UBA 1" evidence="2">
    <location>
        <begin position="156"/>
        <end position="199"/>
    </location>
</feature>
<feature type="domain" description="STI1">
    <location>
        <begin position="260"/>
        <end position="303"/>
    </location>
</feature>
<feature type="domain" description="UBA 2" evidence="2">
    <location>
        <begin position="342"/>
        <end position="382"/>
    </location>
</feature>
<feature type="region of interest" description="Disordered" evidence="4">
    <location>
        <begin position="80"/>
        <end position="109"/>
    </location>
</feature>
<feature type="region of interest" description="Disordered" evidence="4">
    <location>
        <begin position="209"/>
        <end position="237"/>
    </location>
</feature>
<feature type="compositionally biased region" description="Low complexity" evidence="4">
    <location>
        <begin position="214"/>
        <end position="231"/>
    </location>
</feature>
<feature type="sequence conflict" description="In Ref. 1; AAB65841." evidence="6" ref="1">
    <original>N</original>
    <variation>D</variation>
    <location>
        <position position="345"/>
    </location>
</feature>
<feature type="sequence conflict" description="In Ref. 1; AAB65841." evidence="6" ref="1">
    <original>A</original>
    <variation>P</variation>
    <location>
        <position position="353"/>
    </location>
</feature>
<feature type="sequence conflict" description="In Ref. 1; AAB65841." evidence="6" ref="1">
    <original>D</original>
    <variation>A</variation>
    <location>
        <position position="387"/>
    </location>
</feature>
<protein>
    <recommendedName>
        <fullName>Probable ubiquitin receptor RAD23</fullName>
        <shortName>OsRAD23</shortName>
    </recommendedName>
    <alternativeName>
        <fullName>Probable DNA repair protein RAD23</fullName>
    </alternativeName>
</protein>
<name>RAD23_ORYSJ</name>
<dbReference type="EMBL" id="U63530">
    <property type="protein sequence ID" value="AAB65841.1"/>
    <property type="molecule type" value="mRNA"/>
</dbReference>
<dbReference type="EMBL" id="AP005707">
    <property type="protein sequence ID" value="BAD36240.1"/>
    <property type="molecule type" value="Genomic_DNA"/>
</dbReference>
<dbReference type="EMBL" id="AP005722">
    <property type="protein sequence ID" value="BAD36295.1"/>
    <property type="molecule type" value="Genomic_DNA"/>
</dbReference>
<dbReference type="EMBL" id="AP008215">
    <property type="protein sequence ID" value="BAF25048.1"/>
    <property type="molecule type" value="Genomic_DNA"/>
</dbReference>
<dbReference type="EMBL" id="AP014965">
    <property type="protein sequence ID" value="BAT08015.1"/>
    <property type="molecule type" value="Genomic_DNA"/>
</dbReference>
<dbReference type="EMBL" id="CM000146">
    <property type="protein sequence ID" value="EAZ44680.1"/>
    <property type="molecule type" value="Genomic_DNA"/>
</dbReference>
<dbReference type="PIR" id="T04150">
    <property type="entry name" value="T04150"/>
</dbReference>
<dbReference type="RefSeq" id="XP_015611791.1">
    <property type="nucleotide sequence ID" value="XM_015756305.1"/>
</dbReference>
<dbReference type="SMR" id="Q40742"/>
<dbReference type="FunCoup" id="Q40742">
    <property type="interactions" value="2404"/>
</dbReference>
<dbReference type="STRING" id="39947.Q40742"/>
<dbReference type="PaxDb" id="39947-Q40742"/>
<dbReference type="EnsemblPlants" id="Os09t0407200-01">
    <property type="protein sequence ID" value="Os09t0407200-01"/>
    <property type="gene ID" value="Os09g0407200"/>
</dbReference>
<dbReference type="Gramene" id="Os09t0407200-01">
    <property type="protein sequence ID" value="Os09t0407200-01"/>
    <property type="gene ID" value="Os09g0407200"/>
</dbReference>
<dbReference type="KEGG" id="dosa:Os09g0407200"/>
<dbReference type="eggNOG" id="KOG0011">
    <property type="taxonomic scope" value="Eukaryota"/>
</dbReference>
<dbReference type="HOGENOM" id="CLU_040364_1_0_1"/>
<dbReference type="InParanoid" id="Q40742"/>
<dbReference type="OMA" id="IMEDAMP"/>
<dbReference type="OrthoDB" id="419317at2759"/>
<dbReference type="Proteomes" id="UP000000763">
    <property type="component" value="Chromosome 9"/>
</dbReference>
<dbReference type="Proteomes" id="UP000007752">
    <property type="component" value="Chromosome 9"/>
</dbReference>
<dbReference type="Proteomes" id="UP000059680">
    <property type="component" value="Chromosome 9"/>
</dbReference>
<dbReference type="ExpressionAtlas" id="Q40742">
    <property type="expression patterns" value="baseline and differential"/>
</dbReference>
<dbReference type="GO" id="GO:0005829">
    <property type="term" value="C:cytosol"/>
    <property type="evidence" value="ECO:0000318"/>
    <property type="project" value="GO_Central"/>
</dbReference>
<dbReference type="GO" id="GO:0005654">
    <property type="term" value="C:nucleoplasm"/>
    <property type="evidence" value="ECO:0000318"/>
    <property type="project" value="GO_Central"/>
</dbReference>
<dbReference type="GO" id="GO:0003684">
    <property type="term" value="F:damaged DNA binding"/>
    <property type="evidence" value="ECO:0007669"/>
    <property type="project" value="InterPro"/>
</dbReference>
<dbReference type="GO" id="GO:0031593">
    <property type="term" value="F:polyubiquitin modification-dependent protein binding"/>
    <property type="evidence" value="ECO:0000318"/>
    <property type="project" value="GO_Central"/>
</dbReference>
<dbReference type="GO" id="GO:0070628">
    <property type="term" value="F:proteasome binding"/>
    <property type="evidence" value="ECO:0000318"/>
    <property type="project" value="GO_Central"/>
</dbReference>
<dbReference type="GO" id="GO:0043130">
    <property type="term" value="F:ubiquitin binding"/>
    <property type="evidence" value="ECO:0000318"/>
    <property type="project" value="GO_Central"/>
</dbReference>
<dbReference type="GO" id="GO:0006289">
    <property type="term" value="P:nucleotide-excision repair"/>
    <property type="evidence" value="ECO:0007669"/>
    <property type="project" value="InterPro"/>
</dbReference>
<dbReference type="GO" id="GO:0043161">
    <property type="term" value="P:proteasome-mediated ubiquitin-dependent protein catabolic process"/>
    <property type="evidence" value="ECO:0000318"/>
    <property type="project" value="GO_Central"/>
</dbReference>
<dbReference type="CDD" id="cd01805">
    <property type="entry name" value="Ubl_Rad23"/>
    <property type="match status" value="1"/>
</dbReference>
<dbReference type="FunFam" id="3.10.20.90:FF:000069">
    <property type="entry name" value="UV excision repair protein RAD23"/>
    <property type="match status" value="1"/>
</dbReference>
<dbReference type="FunFam" id="1.10.10.540:FF:000001">
    <property type="entry name" value="UV excision repair protein RAD23 B"/>
    <property type="match status" value="1"/>
</dbReference>
<dbReference type="FunFam" id="1.10.8.10:FF:000002">
    <property type="entry name" value="UV excision repair protein RAD23 homolog"/>
    <property type="match status" value="1"/>
</dbReference>
<dbReference type="FunFam" id="1.10.8.10:FF:000003">
    <property type="entry name" value="UV excision repair protein RAD23 homolog"/>
    <property type="match status" value="1"/>
</dbReference>
<dbReference type="Gene3D" id="1.10.8.10">
    <property type="entry name" value="DNA helicase RuvA subunit, C-terminal domain"/>
    <property type="match status" value="2"/>
</dbReference>
<dbReference type="Gene3D" id="3.10.20.90">
    <property type="entry name" value="Phosphatidylinositol 3-kinase Catalytic Subunit, Chain A, domain 1"/>
    <property type="match status" value="1"/>
</dbReference>
<dbReference type="Gene3D" id="1.10.10.540">
    <property type="entry name" value="XPC-binding domain"/>
    <property type="match status" value="1"/>
</dbReference>
<dbReference type="InterPro" id="IPR004806">
    <property type="entry name" value="Rad23"/>
</dbReference>
<dbReference type="InterPro" id="IPR006636">
    <property type="entry name" value="STI1_HS-bd"/>
</dbReference>
<dbReference type="InterPro" id="IPR015940">
    <property type="entry name" value="UBA"/>
</dbReference>
<dbReference type="InterPro" id="IPR009060">
    <property type="entry name" value="UBA-like_sf"/>
</dbReference>
<dbReference type="InterPro" id="IPR000626">
    <property type="entry name" value="Ubiquitin-like_dom"/>
</dbReference>
<dbReference type="InterPro" id="IPR029071">
    <property type="entry name" value="Ubiquitin-like_domsf"/>
</dbReference>
<dbReference type="InterPro" id="IPR015360">
    <property type="entry name" value="XPC-bd"/>
</dbReference>
<dbReference type="InterPro" id="IPR036353">
    <property type="entry name" value="XPC-bd_sf"/>
</dbReference>
<dbReference type="NCBIfam" id="TIGR00601">
    <property type="entry name" value="rad23"/>
    <property type="match status" value="1"/>
</dbReference>
<dbReference type="PANTHER" id="PTHR10621:SF59">
    <property type="entry name" value="UBIQUITIN RECEPTOR RAD23-RELATED"/>
    <property type="match status" value="1"/>
</dbReference>
<dbReference type="PANTHER" id="PTHR10621">
    <property type="entry name" value="UV EXCISION REPAIR PROTEIN RAD23"/>
    <property type="match status" value="1"/>
</dbReference>
<dbReference type="Pfam" id="PF00627">
    <property type="entry name" value="UBA"/>
    <property type="match status" value="2"/>
</dbReference>
<dbReference type="Pfam" id="PF00240">
    <property type="entry name" value="ubiquitin"/>
    <property type="match status" value="1"/>
</dbReference>
<dbReference type="Pfam" id="PF09280">
    <property type="entry name" value="XPC-binding"/>
    <property type="match status" value="1"/>
</dbReference>
<dbReference type="PRINTS" id="PR01839">
    <property type="entry name" value="RAD23PROTEIN"/>
</dbReference>
<dbReference type="SMART" id="SM00727">
    <property type="entry name" value="STI1"/>
    <property type="match status" value="1"/>
</dbReference>
<dbReference type="SMART" id="SM00165">
    <property type="entry name" value="UBA"/>
    <property type="match status" value="2"/>
</dbReference>
<dbReference type="SMART" id="SM00213">
    <property type="entry name" value="UBQ"/>
    <property type="match status" value="1"/>
</dbReference>
<dbReference type="SUPFAM" id="SSF46934">
    <property type="entry name" value="UBA-like"/>
    <property type="match status" value="2"/>
</dbReference>
<dbReference type="SUPFAM" id="SSF54236">
    <property type="entry name" value="Ubiquitin-like"/>
    <property type="match status" value="1"/>
</dbReference>
<dbReference type="SUPFAM" id="SSF101238">
    <property type="entry name" value="XPC-binding domain"/>
    <property type="match status" value="1"/>
</dbReference>
<dbReference type="PROSITE" id="PS50030">
    <property type="entry name" value="UBA"/>
    <property type="match status" value="2"/>
</dbReference>
<dbReference type="PROSITE" id="PS50053">
    <property type="entry name" value="UBIQUITIN_2"/>
    <property type="match status" value="1"/>
</dbReference>
<sequence>MKISVKTLKGSTFQIEVDSAQKVADVKRIIETTQGQHIYPAEQQMLIHQGKVLKDDTTLDENKVLENSFLVIMLRQGKGSSSSAPATSKAPSNQAPPTQTVPAAPASQAPVAPATTVPVTVSAPTPTATASPAPAVAVSSEADNYGQATSNLVAGSNLEATIQSILEMGGGIWDRDIVLHALSAAFNNPERAVEYLYSGVPEQMDIPVPPPSIQPANPTQASQATQPAAPSILSSGPNASPLDLFPQALPNASTDAAGLGNLDALRNNAQFRTLLSLVQANPQILQPLLQELGKQNPQILQLIQENQAEFLHLINEPAEGDDEENLLDQFPEAMPQTIAVTPEENEAILRLEAMGFDRALVLDVFFACNKDEQLAANYLLDHMNEFDDEGPP</sequence>
<organism>
    <name type="scientific">Oryza sativa subsp. japonica</name>
    <name type="common">Rice</name>
    <dbReference type="NCBI Taxonomy" id="39947"/>
    <lineage>
        <taxon>Eukaryota</taxon>
        <taxon>Viridiplantae</taxon>
        <taxon>Streptophyta</taxon>
        <taxon>Embryophyta</taxon>
        <taxon>Tracheophyta</taxon>
        <taxon>Spermatophyta</taxon>
        <taxon>Magnoliopsida</taxon>
        <taxon>Liliopsida</taxon>
        <taxon>Poales</taxon>
        <taxon>Poaceae</taxon>
        <taxon>BOP clade</taxon>
        <taxon>Oryzoideae</taxon>
        <taxon>Oryzeae</taxon>
        <taxon>Oryzinae</taxon>
        <taxon>Oryza</taxon>
        <taxon>Oryza sativa</taxon>
    </lineage>
</organism>
<proteinExistence type="evidence at protein level"/>
<accession>Q40742</accession>
<accession>Q0J1W7</accession>
<accession>Q69MY0</accession>
<evidence type="ECO:0000250" key="1"/>
<evidence type="ECO:0000255" key="2">
    <source>
        <dbReference type="PROSITE-ProRule" id="PRU00212"/>
    </source>
</evidence>
<evidence type="ECO:0000255" key="3">
    <source>
        <dbReference type="PROSITE-ProRule" id="PRU00214"/>
    </source>
</evidence>
<evidence type="ECO:0000256" key="4">
    <source>
        <dbReference type="SAM" id="MobiDB-lite"/>
    </source>
</evidence>
<evidence type="ECO:0000269" key="5">
    <source>
    </source>
</evidence>
<evidence type="ECO:0000305" key="6"/>
<evidence type="ECO:0000312" key="7">
    <source>
        <dbReference type="EMBL" id="EAZ44680.1"/>
    </source>
</evidence>
<keyword id="KW-0227">DNA damage</keyword>
<keyword id="KW-0234">DNA repair</keyword>
<keyword id="KW-0539">Nucleus</keyword>
<keyword id="KW-1185">Reference proteome</keyword>
<keyword id="KW-0677">Repeat</keyword>
<comment type="function">
    <text evidence="1">May be involved in nucleotide excision repair (By similarity). Binds and presumably selects ubiquitin-conjugates for destruction. Prefers multiubiquitin chains rather than single ubiquitins, with a binding affinity for 'Lys-48'-linked ubiquitin chains. Acts as a ubiquitin receptor that associates with the 26S proteasomal docking subunit RPN10 for the indirect recognition of ubiquitinated substrates of ubiquitin/26S proteasome-mediated proteolysis (UPP) (By similarity).</text>
</comment>
<comment type="subunit">
    <text evidence="1 5">Interacts with 'Lys-48'-linked polyubiquitin chains (By similarity). Interacts with RPN10 (By similarity). Interacts with VP1.</text>
</comment>
<comment type="subcellular location">
    <subcellularLocation>
        <location evidence="6">Nucleus</location>
    </subcellularLocation>
</comment>
<comment type="tissue specificity">
    <text evidence="5">Mostly expressed in vegetative tissues.</text>
</comment>
<comment type="similarity">
    <text evidence="6">Belongs to the RAD23 family.</text>
</comment>